<proteinExistence type="evidence at protein level"/>
<reference key="1">
    <citation type="journal article" date="1998" name="Nature">
        <title>Deciphering the biology of Mycobacterium tuberculosis from the complete genome sequence.</title>
        <authorList>
            <person name="Cole S.T."/>
            <person name="Brosch R."/>
            <person name="Parkhill J."/>
            <person name="Garnier T."/>
            <person name="Churcher C.M."/>
            <person name="Harris D.E."/>
            <person name="Gordon S.V."/>
            <person name="Eiglmeier K."/>
            <person name="Gas S."/>
            <person name="Barry C.E. III"/>
            <person name="Tekaia F."/>
            <person name="Badcock K."/>
            <person name="Basham D."/>
            <person name="Brown D."/>
            <person name="Chillingworth T."/>
            <person name="Connor R."/>
            <person name="Davies R.M."/>
            <person name="Devlin K."/>
            <person name="Feltwell T."/>
            <person name="Gentles S."/>
            <person name="Hamlin N."/>
            <person name="Holroyd S."/>
            <person name="Hornsby T."/>
            <person name="Jagels K."/>
            <person name="Krogh A."/>
            <person name="McLean J."/>
            <person name="Moule S."/>
            <person name="Murphy L.D."/>
            <person name="Oliver S."/>
            <person name="Osborne J."/>
            <person name="Quail M.A."/>
            <person name="Rajandream M.A."/>
            <person name="Rogers J."/>
            <person name="Rutter S."/>
            <person name="Seeger K."/>
            <person name="Skelton S."/>
            <person name="Squares S."/>
            <person name="Squares R."/>
            <person name="Sulston J.E."/>
            <person name="Taylor K."/>
            <person name="Whitehead S."/>
            <person name="Barrell B.G."/>
        </authorList>
    </citation>
    <scope>NUCLEOTIDE SEQUENCE [LARGE SCALE GENOMIC DNA]</scope>
    <source>
        <strain>ATCC 25618 / H37Rv</strain>
    </source>
</reference>
<reference key="2">
    <citation type="journal article" date="2011" name="Mol. Cell. Proteomics">
        <title>Proteogenomic analysis of Mycobacterium tuberculosis by high resolution mass spectrometry.</title>
        <authorList>
            <person name="Kelkar D.S."/>
            <person name="Kumar D."/>
            <person name="Kumar P."/>
            <person name="Balakrishnan L."/>
            <person name="Muthusamy B."/>
            <person name="Yadav A.K."/>
            <person name="Shrivastava P."/>
            <person name="Marimuthu A."/>
            <person name="Anand S."/>
            <person name="Sundaram H."/>
            <person name="Kingsbury R."/>
            <person name="Harsha H.C."/>
            <person name="Nair B."/>
            <person name="Prasad T.S."/>
            <person name="Chauhan D.S."/>
            <person name="Katoch K."/>
            <person name="Katoch V.M."/>
            <person name="Kumar P."/>
            <person name="Chaerkady R."/>
            <person name="Ramachandran S."/>
            <person name="Dash D."/>
            <person name="Pandey A."/>
        </authorList>
    </citation>
    <scope>IDENTIFICATION BY MASS SPECTROMETRY [LARGE SCALE ANALYSIS]</scope>
    <source>
        <strain>ATCC 25618 / H37Rv</strain>
    </source>
</reference>
<comment type="similarity">
    <text evidence="2">To M.leprae ML0386.</text>
</comment>
<protein>
    <recommendedName>
        <fullName>Uncharacterized protein Rv3412</fullName>
    </recommendedName>
</protein>
<accession>P9WKY9</accession>
<accession>L0TCP4</accession>
<accession>P65079</accession>
<accession>Q50714</accession>
<dbReference type="EMBL" id="AL123456">
    <property type="protein sequence ID" value="CCP46234.1"/>
    <property type="molecule type" value="Genomic_DNA"/>
</dbReference>
<dbReference type="PIR" id="A70737">
    <property type="entry name" value="A70737"/>
</dbReference>
<dbReference type="RefSeq" id="NP_217929.1">
    <property type="nucleotide sequence ID" value="NC_000962.3"/>
</dbReference>
<dbReference type="RefSeq" id="WP_003418008.1">
    <property type="nucleotide sequence ID" value="NZ_NVQJ01000027.1"/>
</dbReference>
<dbReference type="SMR" id="P9WKY9"/>
<dbReference type="STRING" id="83332.Rv3412"/>
<dbReference type="PaxDb" id="83332-Rv3412"/>
<dbReference type="DNASU" id="887499"/>
<dbReference type="GeneID" id="887499"/>
<dbReference type="KEGG" id="mtu:Rv3412"/>
<dbReference type="KEGG" id="mtv:RVBD_3412"/>
<dbReference type="TubercuList" id="Rv3412"/>
<dbReference type="eggNOG" id="ENOG5032U9K">
    <property type="taxonomic scope" value="Bacteria"/>
</dbReference>
<dbReference type="InParanoid" id="P9WKY9"/>
<dbReference type="OrthoDB" id="3476210at2"/>
<dbReference type="PhylomeDB" id="P9WKY9"/>
<dbReference type="Proteomes" id="UP000001584">
    <property type="component" value="Chromosome"/>
</dbReference>
<dbReference type="InterPro" id="IPR035165">
    <property type="entry name" value="DUF5319"/>
</dbReference>
<dbReference type="Pfam" id="PF17252">
    <property type="entry name" value="DUF5319"/>
    <property type="match status" value="1"/>
</dbReference>
<name>Y3412_MYCTU</name>
<feature type="chain" id="PRO_0000104130" description="Uncharacterized protein Rv3412">
    <location>
        <begin position="1"/>
        <end position="136"/>
    </location>
</feature>
<feature type="region of interest" description="Disordered" evidence="1">
    <location>
        <begin position="1"/>
        <end position="33"/>
    </location>
</feature>
<evidence type="ECO:0000256" key="1">
    <source>
        <dbReference type="SAM" id="MobiDB-lite"/>
    </source>
</evidence>
<evidence type="ECO:0000305" key="2"/>
<keyword id="KW-1185">Reference proteome</keyword>
<sequence length="136" mass="15302">MRDHLPPGLPPDPFADDPCDPSAALEAVEPGQPLDQQERMAVEADLADLAVYEALLAHKGIRGLVVCCDECQQDHYHDWDMLRSNLLQLLIDGTVRPHEPAYDPEPDSYVTWDYCRGYADASLNEAAPDADRFRRR</sequence>
<gene>
    <name type="ordered locus">Rv3412</name>
    <name type="ORF">MTCY78.16c</name>
</gene>
<organism>
    <name type="scientific">Mycobacterium tuberculosis (strain ATCC 25618 / H37Rv)</name>
    <dbReference type="NCBI Taxonomy" id="83332"/>
    <lineage>
        <taxon>Bacteria</taxon>
        <taxon>Bacillati</taxon>
        <taxon>Actinomycetota</taxon>
        <taxon>Actinomycetes</taxon>
        <taxon>Mycobacteriales</taxon>
        <taxon>Mycobacteriaceae</taxon>
        <taxon>Mycobacterium</taxon>
        <taxon>Mycobacterium tuberculosis complex</taxon>
    </lineage>
</organism>